<keyword id="KW-0067">ATP-binding</keyword>
<keyword id="KW-0963">Cytoplasm</keyword>
<keyword id="KW-0237">DNA synthesis</keyword>
<keyword id="KW-0418">Kinase</keyword>
<keyword id="KW-0479">Metal-binding</keyword>
<keyword id="KW-0547">Nucleotide-binding</keyword>
<keyword id="KW-0808">Transferase</keyword>
<keyword id="KW-0862">Zinc</keyword>
<protein>
    <recommendedName>
        <fullName evidence="1">Thymidine kinase</fullName>
        <ecNumber evidence="1">2.7.1.21</ecNumber>
    </recommendedName>
</protein>
<organism>
    <name type="scientific">Streptococcus pyogenes serotype M6 (strain ATCC BAA-946 / MGAS10394)</name>
    <dbReference type="NCBI Taxonomy" id="286636"/>
    <lineage>
        <taxon>Bacteria</taxon>
        <taxon>Bacillati</taxon>
        <taxon>Bacillota</taxon>
        <taxon>Bacilli</taxon>
        <taxon>Lactobacillales</taxon>
        <taxon>Streptococcaceae</taxon>
        <taxon>Streptococcus</taxon>
    </lineage>
</organism>
<reference key="1">
    <citation type="journal article" date="2004" name="J. Infect. Dis.">
        <title>Progress toward characterization of the group A Streptococcus metagenome: complete genome sequence of a macrolide-resistant serotype M6 strain.</title>
        <authorList>
            <person name="Banks D.J."/>
            <person name="Porcella S.F."/>
            <person name="Barbian K.D."/>
            <person name="Beres S.B."/>
            <person name="Philips L.E."/>
            <person name="Voyich J.M."/>
            <person name="DeLeo F.R."/>
            <person name="Martin J.M."/>
            <person name="Somerville G.A."/>
            <person name="Musser J.M."/>
        </authorList>
    </citation>
    <scope>NUCLEOTIDE SEQUENCE [LARGE SCALE GENOMIC DNA]</scope>
    <source>
        <strain>ATCC BAA-946 / MGAS10394</strain>
    </source>
</reference>
<evidence type="ECO:0000255" key="1">
    <source>
        <dbReference type="HAMAP-Rule" id="MF_00124"/>
    </source>
</evidence>
<proteinExistence type="inferred from homology"/>
<feature type="chain" id="PRO_0000175036" description="Thymidine kinase">
    <location>
        <begin position="1"/>
        <end position="189"/>
    </location>
</feature>
<feature type="active site" description="Proton acceptor" evidence="1">
    <location>
        <position position="86"/>
    </location>
</feature>
<feature type="binding site" evidence="1">
    <location>
        <begin position="9"/>
        <end position="16"/>
    </location>
    <ligand>
        <name>ATP</name>
        <dbReference type="ChEBI" id="CHEBI:30616"/>
    </ligand>
</feature>
<feature type="binding site" evidence="1">
    <location>
        <begin position="85"/>
        <end position="88"/>
    </location>
    <ligand>
        <name>ATP</name>
        <dbReference type="ChEBI" id="CHEBI:30616"/>
    </ligand>
</feature>
<feature type="binding site" evidence="1">
    <location>
        <position position="143"/>
    </location>
    <ligand>
        <name>Zn(2+)</name>
        <dbReference type="ChEBI" id="CHEBI:29105"/>
    </ligand>
</feature>
<feature type="binding site" evidence="1">
    <location>
        <position position="146"/>
    </location>
    <ligand>
        <name>Zn(2+)</name>
        <dbReference type="ChEBI" id="CHEBI:29105"/>
    </ligand>
</feature>
<feature type="binding site" evidence="1">
    <location>
        <position position="180"/>
    </location>
    <ligand>
        <name>Zn(2+)</name>
        <dbReference type="ChEBI" id="CHEBI:29105"/>
    </ligand>
</feature>
<feature type="binding site" evidence="1">
    <location>
        <position position="183"/>
    </location>
    <ligand>
        <name>Zn(2+)</name>
        <dbReference type="ChEBI" id="CHEBI:29105"/>
    </ligand>
</feature>
<dbReference type="EC" id="2.7.1.21" evidence="1"/>
<dbReference type="EMBL" id="CP000003">
    <property type="protein sequence ID" value="AAT86993.1"/>
    <property type="molecule type" value="Genomic_DNA"/>
</dbReference>
<dbReference type="RefSeq" id="WP_011184506.1">
    <property type="nucleotide sequence ID" value="NC_006086.1"/>
</dbReference>
<dbReference type="SMR" id="Q5XC70"/>
<dbReference type="KEGG" id="spa:M6_Spy0858"/>
<dbReference type="HOGENOM" id="CLU_064400_2_2_9"/>
<dbReference type="Proteomes" id="UP000001167">
    <property type="component" value="Chromosome"/>
</dbReference>
<dbReference type="GO" id="GO:0005829">
    <property type="term" value="C:cytosol"/>
    <property type="evidence" value="ECO:0007669"/>
    <property type="project" value="TreeGrafter"/>
</dbReference>
<dbReference type="GO" id="GO:0005524">
    <property type="term" value="F:ATP binding"/>
    <property type="evidence" value="ECO:0007669"/>
    <property type="project" value="UniProtKB-UniRule"/>
</dbReference>
<dbReference type="GO" id="GO:0004797">
    <property type="term" value="F:thymidine kinase activity"/>
    <property type="evidence" value="ECO:0007669"/>
    <property type="project" value="UniProtKB-UniRule"/>
</dbReference>
<dbReference type="GO" id="GO:0008270">
    <property type="term" value="F:zinc ion binding"/>
    <property type="evidence" value="ECO:0007669"/>
    <property type="project" value="UniProtKB-UniRule"/>
</dbReference>
<dbReference type="GO" id="GO:0071897">
    <property type="term" value="P:DNA biosynthetic process"/>
    <property type="evidence" value="ECO:0007669"/>
    <property type="project" value="UniProtKB-KW"/>
</dbReference>
<dbReference type="GO" id="GO:0046104">
    <property type="term" value="P:thymidine metabolic process"/>
    <property type="evidence" value="ECO:0007669"/>
    <property type="project" value="TreeGrafter"/>
</dbReference>
<dbReference type="Gene3D" id="3.30.60.20">
    <property type="match status" value="1"/>
</dbReference>
<dbReference type="Gene3D" id="3.40.50.300">
    <property type="entry name" value="P-loop containing nucleotide triphosphate hydrolases"/>
    <property type="match status" value="1"/>
</dbReference>
<dbReference type="HAMAP" id="MF_00124">
    <property type="entry name" value="Thymidine_kinase"/>
    <property type="match status" value="1"/>
</dbReference>
<dbReference type="InterPro" id="IPR027417">
    <property type="entry name" value="P-loop_NTPase"/>
</dbReference>
<dbReference type="InterPro" id="IPR001267">
    <property type="entry name" value="Thymidine_kinase"/>
</dbReference>
<dbReference type="InterPro" id="IPR020633">
    <property type="entry name" value="Thymidine_kinase_CS"/>
</dbReference>
<dbReference type="NCBIfam" id="NF003299">
    <property type="entry name" value="PRK04296.1-4"/>
    <property type="match status" value="1"/>
</dbReference>
<dbReference type="NCBIfam" id="NF003300">
    <property type="entry name" value="PRK04296.1-5"/>
    <property type="match status" value="1"/>
</dbReference>
<dbReference type="PANTHER" id="PTHR11441">
    <property type="entry name" value="THYMIDINE KINASE"/>
    <property type="match status" value="1"/>
</dbReference>
<dbReference type="PANTHER" id="PTHR11441:SF0">
    <property type="entry name" value="THYMIDINE KINASE, CYTOSOLIC"/>
    <property type="match status" value="1"/>
</dbReference>
<dbReference type="Pfam" id="PF00265">
    <property type="entry name" value="TK"/>
    <property type="match status" value="1"/>
</dbReference>
<dbReference type="PIRSF" id="PIRSF035805">
    <property type="entry name" value="TK_cell"/>
    <property type="match status" value="1"/>
</dbReference>
<dbReference type="SUPFAM" id="SSF57716">
    <property type="entry name" value="Glucocorticoid receptor-like (DNA-binding domain)"/>
    <property type="match status" value="1"/>
</dbReference>
<dbReference type="SUPFAM" id="SSF52540">
    <property type="entry name" value="P-loop containing nucleoside triphosphate hydrolases"/>
    <property type="match status" value="1"/>
</dbReference>
<dbReference type="PROSITE" id="PS00603">
    <property type="entry name" value="TK_CELLULAR_TYPE"/>
    <property type="match status" value="1"/>
</dbReference>
<sequence length="189" mass="21529">MAQLYYKYGTMNSGKTIEILKVAHNYEEQGKPVVIMTSALDTRDGFGIVSSRIGMRREAIPISNDIDIFTFIAQLEEKPYCVLIDESQFLSKQNVYDLARVVDELNVPVMAFGLKNDFQNNLFEGSKHLLLLADKIDEIKTICQYCSKKATMVLRTENGKPVYEGDQIQIGGNETYIPVCRKHYFNPEI</sequence>
<gene>
    <name evidence="1" type="primary">tdk</name>
    <name type="ordered locus">M6_Spy0858</name>
</gene>
<name>KITH_STRP6</name>
<comment type="catalytic activity">
    <reaction evidence="1">
        <text>thymidine + ATP = dTMP + ADP + H(+)</text>
        <dbReference type="Rhea" id="RHEA:19129"/>
        <dbReference type="ChEBI" id="CHEBI:15378"/>
        <dbReference type="ChEBI" id="CHEBI:17748"/>
        <dbReference type="ChEBI" id="CHEBI:30616"/>
        <dbReference type="ChEBI" id="CHEBI:63528"/>
        <dbReference type="ChEBI" id="CHEBI:456216"/>
        <dbReference type="EC" id="2.7.1.21"/>
    </reaction>
</comment>
<comment type="subunit">
    <text evidence="1">Homotetramer.</text>
</comment>
<comment type="subcellular location">
    <subcellularLocation>
        <location evidence="1">Cytoplasm</location>
    </subcellularLocation>
</comment>
<comment type="similarity">
    <text evidence="1">Belongs to the thymidine kinase family.</text>
</comment>
<accession>Q5XC70</accession>